<sequence>MVVGIEGIITKKEPTFIIVKCASGLSYGIFISLFCSAKIQTQEKHEFFITQIIKEDSNKFYGFLDKDEQKMFEMLLKVNGVGANTAMAVCSSLDVNSFYKALSLGDESVLKKVPGIGPKSAKRIIVELSDTKTKLENVSDDKSEALAALLTLGFKQEKIISVLASAQATGTSELIKEALKKLG</sequence>
<feature type="chain" id="PRO_1000071015" description="Holliday junction branch migration complex subunit RuvA">
    <location>
        <begin position="1"/>
        <end position="183"/>
    </location>
</feature>
<feature type="region of interest" description="Domain I" evidence="1">
    <location>
        <begin position="1"/>
        <end position="64"/>
    </location>
</feature>
<feature type="region of interest" description="Domain II" evidence="1">
    <location>
        <begin position="65"/>
        <end position="139"/>
    </location>
</feature>
<feature type="region of interest" description="Domain III" evidence="1">
    <location>
        <begin position="139"/>
        <end position="183"/>
    </location>
</feature>
<feature type="region of interest" description="Flexible linker" evidence="1">
    <location>
        <position position="139"/>
    </location>
</feature>
<comment type="function">
    <text evidence="1">The RuvA-RuvB-RuvC complex processes Holliday junction (HJ) DNA during genetic recombination and DNA repair, while the RuvA-RuvB complex plays an important role in the rescue of blocked DNA replication forks via replication fork reversal (RFR). RuvA specifically binds to HJ cruciform DNA, conferring on it an open structure. The RuvB hexamer acts as an ATP-dependent pump, pulling dsDNA into and through the RuvAB complex. HJ branch migration allows RuvC to scan DNA until it finds its consensus sequence, where it cleaves and resolves the cruciform DNA.</text>
</comment>
<comment type="subunit">
    <text evidence="1">Homotetramer. Forms an RuvA(8)-RuvB(12)-Holliday junction (HJ) complex. HJ DNA is sandwiched between 2 RuvA tetramers; dsDNA enters through RuvA and exits via RuvB. An RuvB hexamer assembles on each DNA strand where it exits the tetramer. Each RuvB hexamer is contacted by two RuvA subunits (via domain III) on 2 adjacent RuvB subunits; this complex drives branch migration. In the full resolvosome a probable DNA-RuvA(4)-RuvB(12)-RuvC(2) complex forms which resolves the HJ.</text>
</comment>
<comment type="subcellular location">
    <subcellularLocation>
        <location evidence="1">Cytoplasm</location>
    </subcellularLocation>
</comment>
<comment type="domain">
    <text evidence="1">Has three domains with a flexible linker between the domains II and III and assumes an 'L' shape. Domain III is highly mobile and contacts RuvB.</text>
</comment>
<comment type="similarity">
    <text evidence="1">Belongs to the RuvA family.</text>
</comment>
<protein>
    <recommendedName>
        <fullName evidence="1">Holliday junction branch migration complex subunit RuvA</fullName>
    </recommendedName>
</protein>
<reference key="1">
    <citation type="journal article" date="2007" name="J. Bacteriol.">
        <title>The complete genome sequence of Campylobacter jejuni strain 81116 (NCTC11828).</title>
        <authorList>
            <person name="Pearson B.M."/>
            <person name="Gaskin D.J.H."/>
            <person name="Segers R.P.A.M."/>
            <person name="Wells J.M."/>
            <person name="Nuijten P.J.M."/>
            <person name="van Vliet A.H.M."/>
        </authorList>
    </citation>
    <scope>NUCLEOTIDE SEQUENCE [LARGE SCALE GENOMIC DNA]</scope>
    <source>
        <strain>81116 / NCTC 11828</strain>
    </source>
</reference>
<proteinExistence type="inferred from homology"/>
<gene>
    <name evidence="1" type="primary">ruvA</name>
    <name type="ordered locus">C8J_0750</name>
</gene>
<evidence type="ECO:0000255" key="1">
    <source>
        <dbReference type="HAMAP-Rule" id="MF_00031"/>
    </source>
</evidence>
<name>RUVA_CAMJ8</name>
<organism>
    <name type="scientific">Campylobacter jejuni subsp. jejuni serotype O:6 (strain 81116 / NCTC 11828)</name>
    <dbReference type="NCBI Taxonomy" id="407148"/>
    <lineage>
        <taxon>Bacteria</taxon>
        <taxon>Pseudomonadati</taxon>
        <taxon>Campylobacterota</taxon>
        <taxon>Epsilonproteobacteria</taxon>
        <taxon>Campylobacterales</taxon>
        <taxon>Campylobacteraceae</taxon>
        <taxon>Campylobacter</taxon>
    </lineage>
</organism>
<dbReference type="EMBL" id="CP000814">
    <property type="protein sequence ID" value="ABV52349.1"/>
    <property type="molecule type" value="Genomic_DNA"/>
</dbReference>
<dbReference type="RefSeq" id="WP_002856927.1">
    <property type="nucleotide sequence ID" value="NC_009839.1"/>
</dbReference>
<dbReference type="SMR" id="A8FLL2"/>
<dbReference type="KEGG" id="cju:C8J_0750"/>
<dbReference type="HOGENOM" id="CLU_087936_3_1_7"/>
<dbReference type="GO" id="GO:0005737">
    <property type="term" value="C:cytoplasm"/>
    <property type="evidence" value="ECO:0007669"/>
    <property type="project" value="UniProtKB-SubCell"/>
</dbReference>
<dbReference type="GO" id="GO:0009379">
    <property type="term" value="C:Holliday junction helicase complex"/>
    <property type="evidence" value="ECO:0007669"/>
    <property type="project" value="InterPro"/>
</dbReference>
<dbReference type="GO" id="GO:0048476">
    <property type="term" value="C:Holliday junction resolvase complex"/>
    <property type="evidence" value="ECO:0007669"/>
    <property type="project" value="UniProtKB-UniRule"/>
</dbReference>
<dbReference type="GO" id="GO:0005524">
    <property type="term" value="F:ATP binding"/>
    <property type="evidence" value="ECO:0007669"/>
    <property type="project" value="InterPro"/>
</dbReference>
<dbReference type="GO" id="GO:0000400">
    <property type="term" value="F:four-way junction DNA binding"/>
    <property type="evidence" value="ECO:0007669"/>
    <property type="project" value="UniProtKB-UniRule"/>
</dbReference>
<dbReference type="GO" id="GO:0009378">
    <property type="term" value="F:four-way junction helicase activity"/>
    <property type="evidence" value="ECO:0007669"/>
    <property type="project" value="InterPro"/>
</dbReference>
<dbReference type="GO" id="GO:0006310">
    <property type="term" value="P:DNA recombination"/>
    <property type="evidence" value="ECO:0007669"/>
    <property type="project" value="UniProtKB-UniRule"/>
</dbReference>
<dbReference type="GO" id="GO:0006281">
    <property type="term" value="P:DNA repair"/>
    <property type="evidence" value="ECO:0007669"/>
    <property type="project" value="UniProtKB-UniRule"/>
</dbReference>
<dbReference type="CDD" id="cd14332">
    <property type="entry name" value="UBA_RuvA_C"/>
    <property type="match status" value="1"/>
</dbReference>
<dbReference type="Gene3D" id="1.10.150.20">
    <property type="entry name" value="5' to 3' exonuclease, C-terminal subdomain"/>
    <property type="match status" value="1"/>
</dbReference>
<dbReference type="Gene3D" id="1.10.8.10">
    <property type="entry name" value="DNA helicase RuvA subunit, C-terminal domain"/>
    <property type="match status" value="1"/>
</dbReference>
<dbReference type="Gene3D" id="2.40.50.140">
    <property type="entry name" value="Nucleic acid-binding proteins"/>
    <property type="match status" value="1"/>
</dbReference>
<dbReference type="HAMAP" id="MF_00031">
    <property type="entry name" value="DNA_HJ_migration_RuvA"/>
    <property type="match status" value="1"/>
</dbReference>
<dbReference type="InterPro" id="IPR013849">
    <property type="entry name" value="DNA_helicase_Holl-junc_RuvA_I"/>
</dbReference>
<dbReference type="InterPro" id="IPR003583">
    <property type="entry name" value="Hlx-hairpin-Hlx_DNA-bd_motif"/>
</dbReference>
<dbReference type="InterPro" id="IPR012340">
    <property type="entry name" value="NA-bd_OB-fold"/>
</dbReference>
<dbReference type="InterPro" id="IPR000085">
    <property type="entry name" value="RuvA"/>
</dbReference>
<dbReference type="InterPro" id="IPR010994">
    <property type="entry name" value="RuvA_2-like"/>
</dbReference>
<dbReference type="InterPro" id="IPR011114">
    <property type="entry name" value="RuvA_C"/>
</dbReference>
<dbReference type="InterPro" id="IPR036267">
    <property type="entry name" value="RuvA_C_sf"/>
</dbReference>
<dbReference type="NCBIfam" id="TIGR00084">
    <property type="entry name" value="ruvA"/>
    <property type="match status" value="1"/>
</dbReference>
<dbReference type="Pfam" id="PF14520">
    <property type="entry name" value="HHH_5"/>
    <property type="match status" value="1"/>
</dbReference>
<dbReference type="Pfam" id="PF07499">
    <property type="entry name" value="RuvA_C"/>
    <property type="match status" value="1"/>
</dbReference>
<dbReference type="Pfam" id="PF01330">
    <property type="entry name" value="RuvA_N"/>
    <property type="match status" value="1"/>
</dbReference>
<dbReference type="SMART" id="SM00278">
    <property type="entry name" value="HhH1"/>
    <property type="match status" value="2"/>
</dbReference>
<dbReference type="SUPFAM" id="SSF46929">
    <property type="entry name" value="DNA helicase RuvA subunit, C-terminal domain"/>
    <property type="match status" value="1"/>
</dbReference>
<dbReference type="SUPFAM" id="SSF50249">
    <property type="entry name" value="Nucleic acid-binding proteins"/>
    <property type="match status" value="1"/>
</dbReference>
<dbReference type="SUPFAM" id="SSF47781">
    <property type="entry name" value="RuvA domain 2-like"/>
    <property type="match status" value="1"/>
</dbReference>
<keyword id="KW-0963">Cytoplasm</keyword>
<keyword id="KW-0227">DNA damage</keyword>
<keyword id="KW-0233">DNA recombination</keyword>
<keyword id="KW-0234">DNA repair</keyword>
<keyword id="KW-0238">DNA-binding</keyword>
<accession>A8FLL2</accession>